<gene>
    <name evidence="1" type="primary">metAS</name>
    <name type="ordered locus">ECED1_4720</name>
</gene>
<sequence length="309" mass="35743">MPIRVPDELPAVNFLREENVFVMTTSRASGQEIRPLKVLILNLMPKKIETENQFLRLLSNSPLQVDIQLLRIDSRESRNTPAEHLNNFYCNFEDIQEQNFDGLIVTGAPLGLVEFNDVAYWPQIKQVLEWSKDHVTSTLFVCWAVQAALNILYGIPKQTRTDKLSGVYEHHILHPHALLTRGFDDSFLAPHSRYADFPAALIRDYTDLEILAETEEGDAYLFASKDKRIAFVTGHPEYDAQTLAQEYFRDVEAGLDPDVPYNYFPHNDPQNTPRASWRSHGNLLFTNWLNYYVYQITPYDLRHMNPTLD</sequence>
<evidence type="ECO:0000255" key="1">
    <source>
        <dbReference type="HAMAP-Rule" id="MF_00295"/>
    </source>
</evidence>
<name>METAS_ECO81</name>
<reference key="1">
    <citation type="journal article" date="2009" name="PLoS Genet.">
        <title>Organised genome dynamics in the Escherichia coli species results in highly diverse adaptive paths.</title>
        <authorList>
            <person name="Touchon M."/>
            <person name="Hoede C."/>
            <person name="Tenaillon O."/>
            <person name="Barbe V."/>
            <person name="Baeriswyl S."/>
            <person name="Bidet P."/>
            <person name="Bingen E."/>
            <person name="Bonacorsi S."/>
            <person name="Bouchier C."/>
            <person name="Bouvet O."/>
            <person name="Calteau A."/>
            <person name="Chiapello H."/>
            <person name="Clermont O."/>
            <person name="Cruveiller S."/>
            <person name="Danchin A."/>
            <person name="Diard M."/>
            <person name="Dossat C."/>
            <person name="Karoui M.E."/>
            <person name="Frapy E."/>
            <person name="Garry L."/>
            <person name="Ghigo J.M."/>
            <person name="Gilles A.M."/>
            <person name="Johnson J."/>
            <person name="Le Bouguenec C."/>
            <person name="Lescat M."/>
            <person name="Mangenot S."/>
            <person name="Martinez-Jehanne V."/>
            <person name="Matic I."/>
            <person name="Nassif X."/>
            <person name="Oztas S."/>
            <person name="Petit M.A."/>
            <person name="Pichon C."/>
            <person name="Rouy Z."/>
            <person name="Ruf C.S."/>
            <person name="Schneider D."/>
            <person name="Tourret J."/>
            <person name="Vacherie B."/>
            <person name="Vallenet D."/>
            <person name="Medigue C."/>
            <person name="Rocha E.P.C."/>
            <person name="Denamur E."/>
        </authorList>
    </citation>
    <scope>NUCLEOTIDE SEQUENCE [LARGE SCALE GENOMIC DNA]</scope>
    <source>
        <strain>ED1a</strain>
    </source>
</reference>
<keyword id="KW-0012">Acyltransferase</keyword>
<keyword id="KW-0028">Amino-acid biosynthesis</keyword>
<keyword id="KW-0963">Cytoplasm</keyword>
<keyword id="KW-0486">Methionine biosynthesis</keyword>
<keyword id="KW-0808">Transferase</keyword>
<accession>B7MRD7</accession>
<protein>
    <recommendedName>
        <fullName evidence="1">Homoserine O-succinyltransferase</fullName>
        <shortName evidence="1">HST</shortName>
        <ecNumber evidence="1">2.3.1.46</ecNumber>
    </recommendedName>
    <alternativeName>
        <fullName evidence="1">Homoserine transsuccinylase</fullName>
        <shortName evidence="1">HTS</shortName>
    </alternativeName>
</protein>
<comment type="function">
    <text evidence="1">Transfers a succinyl group from succinyl-CoA to L-homoserine, forming succinyl-L-homoserine.</text>
</comment>
<comment type="catalytic activity">
    <reaction evidence="1">
        <text>L-homoserine + succinyl-CoA = O-succinyl-L-homoserine + CoA</text>
        <dbReference type="Rhea" id="RHEA:22008"/>
        <dbReference type="ChEBI" id="CHEBI:57287"/>
        <dbReference type="ChEBI" id="CHEBI:57292"/>
        <dbReference type="ChEBI" id="CHEBI:57476"/>
        <dbReference type="ChEBI" id="CHEBI:57661"/>
        <dbReference type="EC" id="2.3.1.46"/>
    </reaction>
</comment>
<comment type="pathway">
    <text evidence="1">Amino-acid biosynthesis; L-methionine biosynthesis via de novo pathway; O-succinyl-L-homoserine from L-homoserine: step 1/1.</text>
</comment>
<comment type="subunit">
    <text evidence="1">Homodimer.</text>
</comment>
<comment type="subcellular location">
    <subcellularLocation>
        <location evidence="1">Cytoplasm</location>
    </subcellularLocation>
</comment>
<comment type="similarity">
    <text evidence="1">Belongs to the MetA family.</text>
</comment>
<dbReference type="EC" id="2.3.1.46" evidence="1"/>
<dbReference type="EMBL" id="CU928162">
    <property type="protein sequence ID" value="CAR10825.2"/>
    <property type="molecule type" value="Genomic_DNA"/>
</dbReference>
<dbReference type="SMR" id="B7MRD7"/>
<dbReference type="KEGG" id="ecq:ECED1_4720"/>
<dbReference type="HOGENOM" id="CLU_057851_0_1_6"/>
<dbReference type="UniPathway" id="UPA00051">
    <property type="reaction ID" value="UER00075"/>
</dbReference>
<dbReference type="Proteomes" id="UP000000748">
    <property type="component" value="Chromosome"/>
</dbReference>
<dbReference type="GO" id="GO:0005737">
    <property type="term" value="C:cytoplasm"/>
    <property type="evidence" value="ECO:0007669"/>
    <property type="project" value="UniProtKB-SubCell"/>
</dbReference>
<dbReference type="GO" id="GO:0004414">
    <property type="term" value="F:homoserine O-acetyltransferase activity"/>
    <property type="evidence" value="ECO:0007669"/>
    <property type="project" value="UniProtKB-UniRule"/>
</dbReference>
<dbReference type="GO" id="GO:0008899">
    <property type="term" value="F:homoserine O-succinyltransferase activity"/>
    <property type="evidence" value="ECO:0007669"/>
    <property type="project" value="UniProtKB-EC"/>
</dbReference>
<dbReference type="GO" id="GO:0019281">
    <property type="term" value="P:L-methionine biosynthetic process from homoserine via O-succinyl-L-homoserine and cystathionine"/>
    <property type="evidence" value="ECO:0007669"/>
    <property type="project" value="InterPro"/>
</dbReference>
<dbReference type="CDD" id="cd03131">
    <property type="entry name" value="GATase1_HTS"/>
    <property type="match status" value="1"/>
</dbReference>
<dbReference type="FunFam" id="3.40.50.880:FF:000004">
    <property type="entry name" value="Homoserine O-succinyltransferase"/>
    <property type="match status" value="1"/>
</dbReference>
<dbReference type="Gene3D" id="3.40.50.880">
    <property type="match status" value="1"/>
</dbReference>
<dbReference type="HAMAP" id="MF_00295">
    <property type="entry name" value="MetA_acyltransf"/>
    <property type="match status" value="1"/>
</dbReference>
<dbReference type="InterPro" id="IPR029062">
    <property type="entry name" value="Class_I_gatase-like"/>
</dbReference>
<dbReference type="InterPro" id="IPR005697">
    <property type="entry name" value="HST_MetA"/>
</dbReference>
<dbReference type="InterPro" id="IPR033752">
    <property type="entry name" value="MetA_family"/>
</dbReference>
<dbReference type="NCBIfam" id="TIGR01001">
    <property type="entry name" value="metA"/>
    <property type="match status" value="1"/>
</dbReference>
<dbReference type="PANTHER" id="PTHR20919">
    <property type="entry name" value="HOMOSERINE O-SUCCINYLTRANSFERASE"/>
    <property type="match status" value="1"/>
</dbReference>
<dbReference type="PANTHER" id="PTHR20919:SF0">
    <property type="entry name" value="HOMOSERINE O-SUCCINYLTRANSFERASE"/>
    <property type="match status" value="1"/>
</dbReference>
<dbReference type="Pfam" id="PF04204">
    <property type="entry name" value="HTS"/>
    <property type="match status" value="1"/>
</dbReference>
<dbReference type="PIRSF" id="PIRSF000450">
    <property type="entry name" value="H_ser_succinyltr"/>
    <property type="match status" value="1"/>
</dbReference>
<dbReference type="SUPFAM" id="SSF52317">
    <property type="entry name" value="Class I glutamine amidotransferase-like"/>
    <property type="match status" value="1"/>
</dbReference>
<proteinExistence type="inferred from homology"/>
<organism>
    <name type="scientific">Escherichia coli O81 (strain ED1a)</name>
    <dbReference type="NCBI Taxonomy" id="585397"/>
    <lineage>
        <taxon>Bacteria</taxon>
        <taxon>Pseudomonadati</taxon>
        <taxon>Pseudomonadota</taxon>
        <taxon>Gammaproteobacteria</taxon>
        <taxon>Enterobacterales</taxon>
        <taxon>Enterobacteriaceae</taxon>
        <taxon>Escherichia</taxon>
    </lineage>
</organism>
<feature type="chain" id="PRO_1000191186" description="Homoserine O-succinyltransferase">
    <location>
        <begin position="1"/>
        <end position="309"/>
    </location>
</feature>
<feature type="active site" description="Acyl-thioester intermediate" evidence="1">
    <location>
        <position position="142"/>
    </location>
</feature>
<feature type="active site" description="Proton acceptor" evidence="1">
    <location>
        <position position="235"/>
    </location>
</feature>
<feature type="active site" evidence="1">
    <location>
        <position position="237"/>
    </location>
</feature>
<feature type="binding site" evidence="1">
    <location>
        <position position="163"/>
    </location>
    <ligand>
        <name>substrate</name>
    </ligand>
</feature>
<feature type="binding site" evidence="1">
    <location>
        <position position="192"/>
    </location>
    <ligand>
        <name>substrate</name>
    </ligand>
</feature>
<feature type="binding site" evidence="1">
    <location>
        <position position="249"/>
    </location>
    <ligand>
        <name>substrate</name>
    </ligand>
</feature>
<feature type="site" description="Important for acyl-CoA specificity" evidence="1">
    <location>
        <position position="111"/>
    </location>
</feature>
<feature type="site" description="Important for substrate specificity" evidence="1">
    <location>
        <position position="192"/>
    </location>
</feature>